<keyword id="KW-0227">DNA damage</keyword>
<keyword id="KW-0233">DNA recombination</keyword>
<keyword id="KW-0234">DNA repair</keyword>
<keyword id="KW-0479">Metal-binding</keyword>
<keyword id="KW-1185">Reference proteome</keyword>
<keyword id="KW-0862">Zinc</keyword>
<keyword id="KW-0863">Zinc-finger</keyword>
<proteinExistence type="inferred from homology"/>
<reference key="1">
    <citation type="journal article" date="2010" name="J. Bacteriol.">
        <title>Complete genome sequence of Beijerinckia indica subsp. indica.</title>
        <authorList>
            <person name="Tamas I."/>
            <person name="Dedysh S.N."/>
            <person name="Liesack W."/>
            <person name="Stott M.B."/>
            <person name="Alam M."/>
            <person name="Murrell J.C."/>
            <person name="Dunfield P.F."/>
        </authorList>
    </citation>
    <scope>NUCLEOTIDE SEQUENCE [LARGE SCALE GENOMIC DNA]</scope>
    <source>
        <strain>ATCC 9039 / DSM 1715 / NCIMB 8712</strain>
    </source>
</reference>
<accession>B2ICM1</accession>
<comment type="function">
    <text evidence="1">May play a role in DNA repair. It seems to be involved in an RecBC-independent recombinational process of DNA repair. It may act with RecF and RecO.</text>
</comment>
<comment type="similarity">
    <text evidence="1">Belongs to the RecR family.</text>
</comment>
<feature type="chain" id="PRO_1000195364" description="Recombination protein RecR">
    <location>
        <begin position="1"/>
        <end position="201"/>
    </location>
</feature>
<feature type="domain" description="Toprim" evidence="1">
    <location>
        <begin position="83"/>
        <end position="178"/>
    </location>
</feature>
<feature type="zinc finger region" description="C4-type" evidence="1">
    <location>
        <begin position="60"/>
        <end position="75"/>
    </location>
</feature>
<dbReference type="EMBL" id="CP001016">
    <property type="protein sequence ID" value="ACB93910.1"/>
    <property type="molecule type" value="Genomic_DNA"/>
</dbReference>
<dbReference type="RefSeq" id="WP_012383268.1">
    <property type="nucleotide sequence ID" value="NC_010581.1"/>
</dbReference>
<dbReference type="SMR" id="B2ICM1"/>
<dbReference type="STRING" id="395963.Bind_0254"/>
<dbReference type="KEGG" id="bid:Bind_0254"/>
<dbReference type="eggNOG" id="COG0353">
    <property type="taxonomic scope" value="Bacteria"/>
</dbReference>
<dbReference type="HOGENOM" id="CLU_060739_1_1_5"/>
<dbReference type="OrthoDB" id="9802672at2"/>
<dbReference type="Proteomes" id="UP000001695">
    <property type="component" value="Chromosome"/>
</dbReference>
<dbReference type="GO" id="GO:0003677">
    <property type="term" value="F:DNA binding"/>
    <property type="evidence" value="ECO:0007669"/>
    <property type="project" value="UniProtKB-UniRule"/>
</dbReference>
<dbReference type="GO" id="GO:0008270">
    <property type="term" value="F:zinc ion binding"/>
    <property type="evidence" value="ECO:0007669"/>
    <property type="project" value="UniProtKB-KW"/>
</dbReference>
<dbReference type="GO" id="GO:0006310">
    <property type="term" value="P:DNA recombination"/>
    <property type="evidence" value="ECO:0007669"/>
    <property type="project" value="UniProtKB-UniRule"/>
</dbReference>
<dbReference type="GO" id="GO:0006281">
    <property type="term" value="P:DNA repair"/>
    <property type="evidence" value="ECO:0007669"/>
    <property type="project" value="UniProtKB-UniRule"/>
</dbReference>
<dbReference type="CDD" id="cd01025">
    <property type="entry name" value="TOPRIM_recR"/>
    <property type="match status" value="1"/>
</dbReference>
<dbReference type="Gene3D" id="3.40.1360.10">
    <property type="match status" value="1"/>
</dbReference>
<dbReference type="Gene3D" id="6.10.250.240">
    <property type="match status" value="1"/>
</dbReference>
<dbReference type="Gene3D" id="1.10.8.420">
    <property type="entry name" value="RecR Domain 1"/>
    <property type="match status" value="1"/>
</dbReference>
<dbReference type="HAMAP" id="MF_00017">
    <property type="entry name" value="RecR"/>
    <property type="match status" value="1"/>
</dbReference>
<dbReference type="InterPro" id="IPR000093">
    <property type="entry name" value="DNA_Rcmb_RecR"/>
</dbReference>
<dbReference type="InterPro" id="IPR023627">
    <property type="entry name" value="Rcmb_RecR"/>
</dbReference>
<dbReference type="InterPro" id="IPR015967">
    <property type="entry name" value="Rcmb_RecR_Znf"/>
</dbReference>
<dbReference type="InterPro" id="IPR006171">
    <property type="entry name" value="TOPRIM_dom"/>
</dbReference>
<dbReference type="InterPro" id="IPR034137">
    <property type="entry name" value="TOPRIM_RecR"/>
</dbReference>
<dbReference type="NCBIfam" id="TIGR00615">
    <property type="entry name" value="recR"/>
    <property type="match status" value="1"/>
</dbReference>
<dbReference type="PANTHER" id="PTHR30446">
    <property type="entry name" value="RECOMBINATION PROTEIN RECR"/>
    <property type="match status" value="1"/>
</dbReference>
<dbReference type="PANTHER" id="PTHR30446:SF0">
    <property type="entry name" value="RECOMBINATION PROTEIN RECR"/>
    <property type="match status" value="1"/>
</dbReference>
<dbReference type="Pfam" id="PF21175">
    <property type="entry name" value="RecR_C"/>
    <property type="match status" value="1"/>
</dbReference>
<dbReference type="Pfam" id="PF21176">
    <property type="entry name" value="RecR_HhH"/>
    <property type="match status" value="1"/>
</dbReference>
<dbReference type="Pfam" id="PF02132">
    <property type="entry name" value="RecR_ZnF"/>
    <property type="match status" value="1"/>
</dbReference>
<dbReference type="Pfam" id="PF13662">
    <property type="entry name" value="Toprim_4"/>
    <property type="match status" value="1"/>
</dbReference>
<dbReference type="SMART" id="SM00493">
    <property type="entry name" value="TOPRIM"/>
    <property type="match status" value="1"/>
</dbReference>
<dbReference type="SUPFAM" id="SSF111304">
    <property type="entry name" value="Recombination protein RecR"/>
    <property type="match status" value="1"/>
</dbReference>
<dbReference type="PROSITE" id="PS01300">
    <property type="entry name" value="RECR"/>
    <property type="match status" value="1"/>
</dbReference>
<dbReference type="PROSITE" id="PS50880">
    <property type="entry name" value="TOPRIM"/>
    <property type="match status" value="1"/>
</dbReference>
<name>RECR_BEII9</name>
<evidence type="ECO:0000255" key="1">
    <source>
        <dbReference type="HAMAP-Rule" id="MF_00017"/>
    </source>
</evidence>
<sequence>MTAPIAGPEIERLIHLLARLPGLGPRSARRAALHLIRKRTELLGPLAEALQQAYNHLIPCQICGNIDTRDPCTICADAKRDPTLLVVVETVADLWALERAAALPARYHVLGGTLSPLDGVGPKDLNLQSLTERVAQGEIREVILAVNATVDGQTTAHYITDSLAAFPVKITRLAHGVPVGGELDYLDEGTLAAALRSRTNF</sequence>
<organism>
    <name type="scientific">Beijerinckia indica subsp. indica (strain ATCC 9039 / DSM 1715 / NCIMB 8712)</name>
    <dbReference type="NCBI Taxonomy" id="395963"/>
    <lineage>
        <taxon>Bacteria</taxon>
        <taxon>Pseudomonadati</taxon>
        <taxon>Pseudomonadota</taxon>
        <taxon>Alphaproteobacteria</taxon>
        <taxon>Hyphomicrobiales</taxon>
        <taxon>Beijerinckiaceae</taxon>
        <taxon>Beijerinckia</taxon>
    </lineage>
</organism>
<protein>
    <recommendedName>
        <fullName evidence="1">Recombination protein RecR</fullName>
    </recommendedName>
</protein>
<gene>
    <name evidence="1" type="primary">recR</name>
    <name type="ordered locus">Bind_0254</name>
</gene>